<evidence type="ECO:0000250" key="1"/>
<evidence type="ECO:0000305" key="2"/>
<comment type="function">
    <text evidence="1">Involved in protein export. Acts as a chaperone by maintaining the newly synthesized protein in an open conformation. Functions as a peptidyl-prolyl cis-trans isomerase (By similarity).</text>
</comment>
<comment type="catalytic activity">
    <reaction>
        <text>[protein]-peptidylproline (omega=180) = [protein]-peptidylproline (omega=0)</text>
        <dbReference type="Rhea" id="RHEA:16237"/>
        <dbReference type="Rhea" id="RHEA-COMP:10747"/>
        <dbReference type="Rhea" id="RHEA-COMP:10748"/>
        <dbReference type="ChEBI" id="CHEBI:83833"/>
        <dbReference type="ChEBI" id="CHEBI:83834"/>
        <dbReference type="EC" id="5.2.1.8"/>
    </reaction>
</comment>
<comment type="subunit">
    <text evidence="1">Homodimer and monomer. In vivo most of the ribosomes are in complex with monomeric TF. Uncomplexed TF, however, is in a monomer-dimer equilibrium with approximately two thirds of TF existing in a dimeric state (By similarity).</text>
</comment>
<comment type="subcellular location">
    <subcellularLocation>
        <location>Cytoplasm</location>
    </subcellularLocation>
    <text evidence="1">About half TF is bound to the ribosome near the polypeptide exit tunnel while the other half is free in the cytoplasm.</text>
</comment>
<comment type="domain">
    <text evidence="1">Consists of 3 domains; the N-terminus binds the ribosome, the middle domain has PPIase activity, while the C-terminus has intrinsic chaperone activity on its own.</text>
</comment>
<comment type="similarity">
    <text evidence="2">Belongs to the FKBP-type PPIase family. Tig subfamily.</text>
</comment>
<name>TIG_ECO57</name>
<feature type="chain" id="PRO_0000179348" description="Trigger factor">
    <location>
        <begin position="1"/>
        <end position="432"/>
    </location>
</feature>
<feature type="domain" description="PPIase FKBP-type">
    <location>
        <begin position="161"/>
        <end position="246"/>
    </location>
</feature>
<organism>
    <name type="scientific">Escherichia coli O157:H7</name>
    <dbReference type="NCBI Taxonomy" id="83334"/>
    <lineage>
        <taxon>Bacteria</taxon>
        <taxon>Pseudomonadati</taxon>
        <taxon>Pseudomonadota</taxon>
        <taxon>Gammaproteobacteria</taxon>
        <taxon>Enterobacterales</taxon>
        <taxon>Enterobacteriaceae</taxon>
        <taxon>Escherichia</taxon>
    </lineage>
</organism>
<accession>P0A851</accession>
<accession>P15299</accession>
<accession>P22257</accession>
<accession>P77603</accession>
<proteinExistence type="inferred from homology"/>
<protein>
    <recommendedName>
        <fullName>Trigger factor</fullName>
        <shortName>TF</shortName>
        <ecNumber>5.2.1.8</ecNumber>
    </recommendedName>
    <alternativeName>
        <fullName>PPIase</fullName>
    </alternativeName>
</protein>
<keyword id="KW-0131">Cell cycle</keyword>
<keyword id="KW-0132">Cell division</keyword>
<keyword id="KW-0143">Chaperone</keyword>
<keyword id="KW-0963">Cytoplasm</keyword>
<keyword id="KW-0413">Isomerase</keyword>
<keyword id="KW-1185">Reference proteome</keyword>
<keyword id="KW-0697">Rotamase</keyword>
<sequence>MQVSVETTQGLGRRVTITIAADSIETAVKSELVNVAKKVRIDGFRKGKVPMNIVAQRYGASVRQDVLGDLMSRNFIDAIIKEKINPAGAPTYVPGEYKLGEDFTYSVEFEVYPEVELQGLEAIEVEKPIVEVTDADVDGMLDTLRKQQATWKEKDGAVEAEDRVTIDFTGSVDGEEFEGGKASDFVLAMGQGRMIPGFEDGIKGHKAGEEFTIDVTFPEEYHAENLKGKAAKFAINLKKVEERELPELTAEFIKRFGVEDGSVEGLRAEVRKNMERELKSAIRNRVKSQAIEGLVKANDIDVPAALIDSEIDVLRRQAAQRFGGNEKQALELPRELFEEQAKRRVVVGLLLGEVIRTNELKADEERVKGLIEEMASAYEDPKEVIEFYSKNKELMDNMRNVALEEQAVEAVLAKAKVTEKETTFNELMNQQA</sequence>
<dbReference type="EC" id="5.2.1.8"/>
<dbReference type="EMBL" id="AE005174">
    <property type="protein sequence ID" value="AAG54786.1"/>
    <property type="molecule type" value="Genomic_DNA"/>
</dbReference>
<dbReference type="EMBL" id="BA000007">
    <property type="protein sequence ID" value="BAB33913.1"/>
    <property type="molecule type" value="Genomic_DNA"/>
</dbReference>
<dbReference type="PIR" id="B90690">
    <property type="entry name" value="B90690"/>
</dbReference>
<dbReference type="PIR" id="F85540">
    <property type="entry name" value="F85540"/>
</dbReference>
<dbReference type="RefSeq" id="NP_308517.1">
    <property type="nucleotide sequence ID" value="NC_002695.1"/>
</dbReference>
<dbReference type="RefSeq" id="WP_001198386.1">
    <property type="nucleotide sequence ID" value="NZ_VOAI01000005.1"/>
</dbReference>
<dbReference type="SMR" id="P0A851"/>
<dbReference type="STRING" id="155864.Z0541"/>
<dbReference type="GeneID" id="75202861"/>
<dbReference type="GeneID" id="914592"/>
<dbReference type="KEGG" id="ece:Z0541"/>
<dbReference type="KEGG" id="ecs:ECs_0490"/>
<dbReference type="PATRIC" id="fig|386585.9.peg.593"/>
<dbReference type="eggNOG" id="COG0544">
    <property type="taxonomic scope" value="Bacteria"/>
</dbReference>
<dbReference type="HOGENOM" id="CLU_033058_2_0_6"/>
<dbReference type="OMA" id="KGIKTQF"/>
<dbReference type="Proteomes" id="UP000000558">
    <property type="component" value="Chromosome"/>
</dbReference>
<dbReference type="Proteomes" id="UP000002519">
    <property type="component" value="Chromosome"/>
</dbReference>
<dbReference type="GO" id="GO:0005737">
    <property type="term" value="C:cytoplasm"/>
    <property type="evidence" value="ECO:0007669"/>
    <property type="project" value="UniProtKB-SubCell"/>
</dbReference>
<dbReference type="GO" id="GO:0003755">
    <property type="term" value="F:peptidyl-prolyl cis-trans isomerase activity"/>
    <property type="evidence" value="ECO:0007669"/>
    <property type="project" value="UniProtKB-UniRule"/>
</dbReference>
<dbReference type="GO" id="GO:0044183">
    <property type="term" value="F:protein folding chaperone"/>
    <property type="evidence" value="ECO:0007669"/>
    <property type="project" value="TreeGrafter"/>
</dbReference>
<dbReference type="GO" id="GO:0043022">
    <property type="term" value="F:ribosome binding"/>
    <property type="evidence" value="ECO:0007669"/>
    <property type="project" value="TreeGrafter"/>
</dbReference>
<dbReference type="GO" id="GO:0051083">
    <property type="term" value="P:'de novo' cotranslational protein folding"/>
    <property type="evidence" value="ECO:0007669"/>
    <property type="project" value="TreeGrafter"/>
</dbReference>
<dbReference type="GO" id="GO:0051301">
    <property type="term" value="P:cell division"/>
    <property type="evidence" value="ECO:0007669"/>
    <property type="project" value="UniProtKB-KW"/>
</dbReference>
<dbReference type="GO" id="GO:0061077">
    <property type="term" value="P:chaperone-mediated protein folding"/>
    <property type="evidence" value="ECO:0007669"/>
    <property type="project" value="TreeGrafter"/>
</dbReference>
<dbReference type="GO" id="GO:0015031">
    <property type="term" value="P:protein transport"/>
    <property type="evidence" value="ECO:0007669"/>
    <property type="project" value="UniProtKB-UniRule"/>
</dbReference>
<dbReference type="GO" id="GO:0043335">
    <property type="term" value="P:protein unfolding"/>
    <property type="evidence" value="ECO:0007669"/>
    <property type="project" value="TreeGrafter"/>
</dbReference>
<dbReference type="FunFam" id="1.10.3120.10:FF:000001">
    <property type="entry name" value="Trigger factor"/>
    <property type="match status" value="1"/>
</dbReference>
<dbReference type="FunFam" id="3.10.50.40:FF:000001">
    <property type="entry name" value="Trigger factor"/>
    <property type="match status" value="1"/>
</dbReference>
<dbReference type="FunFam" id="3.30.70.1050:FF:000001">
    <property type="entry name" value="Trigger factor"/>
    <property type="match status" value="1"/>
</dbReference>
<dbReference type="Gene3D" id="3.10.50.40">
    <property type="match status" value="1"/>
</dbReference>
<dbReference type="Gene3D" id="3.30.70.1050">
    <property type="entry name" value="Trigger factor ribosome-binding domain"/>
    <property type="match status" value="1"/>
</dbReference>
<dbReference type="Gene3D" id="1.10.3120.10">
    <property type="entry name" value="Trigger factor, C-terminal domain"/>
    <property type="match status" value="1"/>
</dbReference>
<dbReference type="HAMAP" id="MF_00303">
    <property type="entry name" value="Trigger_factor_Tig"/>
    <property type="match status" value="1"/>
</dbReference>
<dbReference type="InterPro" id="IPR046357">
    <property type="entry name" value="PPIase_dom_sf"/>
</dbReference>
<dbReference type="InterPro" id="IPR001179">
    <property type="entry name" value="PPIase_FKBP_dom"/>
</dbReference>
<dbReference type="InterPro" id="IPR005215">
    <property type="entry name" value="Trig_fac"/>
</dbReference>
<dbReference type="InterPro" id="IPR008880">
    <property type="entry name" value="Trigger_fac_C"/>
</dbReference>
<dbReference type="InterPro" id="IPR037041">
    <property type="entry name" value="Trigger_fac_C_sf"/>
</dbReference>
<dbReference type="InterPro" id="IPR008881">
    <property type="entry name" value="Trigger_fac_ribosome-bd_bac"/>
</dbReference>
<dbReference type="InterPro" id="IPR036611">
    <property type="entry name" value="Trigger_fac_ribosome-bd_sf"/>
</dbReference>
<dbReference type="InterPro" id="IPR027304">
    <property type="entry name" value="Trigger_fact/SurA_dom_sf"/>
</dbReference>
<dbReference type="NCBIfam" id="TIGR00115">
    <property type="entry name" value="tig"/>
    <property type="match status" value="1"/>
</dbReference>
<dbReference type="PANTHER" id="PTHR30560">
    <property type="entry name" value="TRIGGER FACTOR CHAPERONE AND PEPTIDYL-PROLYL CIS/TRANS ISOMERASE"/>
    <property type="match status" value="1"/>
</dbReference>
<dbReference type="PANTHER" id="PTHR30560:SF3">
    <property type="entry name" value="TRIGGER FACTOR-LIKE PROTEIN TIG, CHLOROPLASTIC"/>
    <property type="match status" value="1"/>
</dbReference>
<dbReference type="Pfam" id="PF00254">
    <property type="entry name" value="FKBP_C"/>
    <property type="match status" value="1"/>
</dbReference>
<dbReference type="Pfam" id="PF05698">
    <property type="entry name" value="Trigger_C"/>
    <property type="match status" value="1"/>
</dbReference>
<dbReference type="Pfam" id="PF05697">
    <property type="entry name" value="Trigger_N"/>
    <property type="match status" value="1"/>
</dbReference>
<dbReference type="PIRSF" id="PIRSF003095">
    <property type="entry name" value="Trigger_factor"/>
    <property type="match status" value="1"/>
</dbReference>
<dbReference type="SUPFAM" id="SSF54534">
    <property type="entry name" value="FKBP-like"/>
    <property type="match status" value="1"/>
</dbReference>
<dbReference type="SUPFAM" id="SSF109998">
    <property type="entry name" value="Triger factor/SurA peptide-binding domain-like"/>
    <property type="match status" value="1"/>
</dbReference>
<dbReference type="SUPFAM" id="SSF102735">
    <property type="entry name" value="Trigger factor ribosome-binding domain"/>
    <property type="match status" value="1"/>
</dbReference>
<dbReference type="PROSITE" id="PS50059">
    <property type="entry name" value="FKBP_PPIASE"/>
    <property type="match status" value="1"/>
</dbReference>
<reference key="1">
    <citation type="journal article" date="2001" name="Nature">
        <title>Genome sequence of enterohaemorrhagic Escherichia coli O157:H7.</title>
        <authorList>
            <person name="Perna N.T."/>
            <person name="Plunkett G. III"/>
            <person name="Burland V."/>
            <person name="Mau B."/>
            <person name="Glasner J.D."/>
            <person name="Rose D.J."/>
            <person name="Mayhew G.F."/>
            <person name="Evans P.S."/>
            <person name="Gregor J."/>
            <person name="Kirkpatrick H.A."/>
            <person name="Posfai G."/>
            <person name="Hackett J."/>
            <person name="Klink S."/>
            <person name="Boutin A."/>
            <person name="Shao Y."/>
            <person name="Miller L."/>
            <person name="Grotbeck E.J."/>
            <person name="Davis N.W."/>
            <person name="Lim A."/>
            <person name="Dimalanta E.T."/>
            <person name="Potamousis K."/>
            <person name="Apodaca J."/>
            <person name="Anantharaman T.S."/>
            <person name="Lin J."/>
            <person name="Yen G."/>
            <person name="Schwartz D.C."/>
            <person name="Welch R.A."/>
            <person name="Blattner F.R."/>
        </authorList>
    </citation>
    <scope>NUCLEOTIDE SEQUENCE [LARGE SCALE GENOMIC DNA]</scope>
    <source>
        <strain>O157:H7 / EDL933 / ATCC 700927 / EHEC</strain>
    </source>
</reference>
<reference key="2">
    <citation type="journal article" date="2001" name="DNA Res.">
        <title>Complete genome sequence of enterohemorrhagic Escherichia coli O157:H7 and genomic comparison with a laboratory strain K-12.</title>
        <authorList>
            <person name="Hayashi T."/>
            <person name="Makino K."/>
            <person name="Ohnishi M."/>
            <person name="Kurokawa K."/>
            <person name="Ishii K."/>
            <person name="Yokoyama K."/>
            <person name="Han C.-G."/>
            <person name="Ohtsubo E."/>
            <person name="Nakayama K."/>
            <person name="Murata T."/>
            <person name="Tanaka M."/>
            <person name="Tobe T."/>
            <person name="Iida T."/>
            <person name="Takami H."/>
            <person name="Honda T."/>
            <person name="Sasakawa C."/>
            <person name="Ogasawara N."/>
            <person name="Yasunaga T."/>
            <person name="Kuhara S."/>
            <person name="Shiba T."/>
            <person name="Hattori M."/>
            <person name="Shinagawa H."/>
        </authorList>
    </citation>
    <scope>NUCLEOTIDE SEQUENCE [LARGE SCALE GENOMIC DNA]</scope>
    <source>
        <strain>O157:H7 / Sakai / RIMD 0509952 / EHEC</strain>
    </source>
</reference>
<gene>
    <name type="primary">tig</name>
    <name type="ordered locus">Z0541</name>
    <name type="ordered locus">ECs0490</name>
</gene>